<sequence length="677" mass="74447">MHHLLEQSADMATALLAGEKLRELILPGAQDDKAGALAALLLQLKLELPFDRVVTIGTVLVPILLVTLVFTKNFAEEPIYCYTPHNFTRDQALYARGYCWTELRDALPGVDASLWPSLFEHKFLPYALLAFAAIMYVPALGWEFLASTRLTSELNFLLQEIDNCYHRAAEGRAPKIEKQIQSKGPGITEREKREIIENAEKEKSPEQNLFEKYLERRGRSNFLAKLYLARHVLILLLSAVPISYLCTYYATQKQNEFTCALGASPDGAAGAGPAVRVSCKLPSVQLQRIIAGVDIVLLCVMNLIILVNLIHLFIFRKSNFIFDKLHKVGIKTRRQWRRSQFCDINILAMFCNENRDHIKSLNRLDFITNESDLMYDNVVRQLLAALAQSNHDATPTVRDSGVQTVDPSANPAEPDGAAEPPVVKRPRKKMKWIPTSNPLPQPFKEPLAIMRVENSKAEKPKPARRKTATDTLIAPLLDRSAHHYKGGGGDPGPGPAPAPAPPPAPDKKHARHFSLDVHPYILGTKKAKAEAVPAALPASRSQEGGFLSQAEDCGLGLAPAPIKDAPLPEKEIPYPTEPARAGLPSGGPFHVRSPPAAPAVAPLTPASLGKAEPLTILSRNATHPLLHINTLYEAREEEDGGPRLPQDVGDLIAIPAPQQILIATFDEPRTVVSTVEF</sequence>
<gene>
    <name evidence="10" type="primary">PANX2</name>
</gene>
<proteinExistence type="evidence at protein level"/>
<feature type="chain" id="PRO_0000208488" description="Pannexin-2">
    <location>
        <begin position="1"/>
        <end position="677"/>
    </location>
</feature>
<feature type="topological domain" description="Cytoplasmic" evidence="2">
    <location>
        <begin position="11"/>
        <end position="47"/>
    </location>
</feature>
<feature type="transmembrane region" description="Helical" evidence="3">
    <location>
        <begin position="48"/>
        <end position="70"/>
    </location>
</feature>
<feature type="topological domain" description="Extracellular" evidence="2">
    <location>
        <begin position="71"/>
        <end position="123"/>
    </location>
</feature>
<feature type="transmembrane region" description="Helical" evidence="3">
    <location>
        <begin position="124"/>
        <end position="146"/>
    </location>
</feature>
<feature type="topological domain" description="Cytoplasmic" evidence="2">
    <location>
        <begin position="147"/>
        <end position="226"/>
    </location>
</feature>
<feature type="transmembrane region" description="Helical" evidence="3">
    <location>
        <begin position="227"/>
        <end position="249"/>
    </location>
</feature>
<feature type="topological domain" description="Extracellular" evidence="2">
    <location>
        <begin position="250"/>
        <end position="292"/>
    </location>
</feature>
<feature type="transmembrane region" description="Helical" evidence="3">
    <location>
        <begin position="293"/>
        <end position="315"/>
    </location>
</feature>
<feature type="topological domain" description="Cytoplasmic" evidence="2">
    <location>
        <begin position="316"/>
        <end position="643"/>
    </location>
</feature>
<feature type="region of interest" description="Disordered" evidence="4">
    <location>
        <begin position="393"/>
        <end position="423"/>
    </location>
</feature>
<feature type="region of interest" description="Disordered" evidence="4">
    <location>
        <begin position="454"/>
        <end position="510"/>
    </location>
</feature>
<feature type="compositionally biased region" description="Pro residues" evidence="4">
    <location>
        <begin position="492"/>
        <end position="504"/>
    </location>
</feature>
<feature type="site" description="Cleavage; by CASP3 or CASP7" evidence="1">
    <location>
        <position position="415"/>
    </location>
</feature>
<feature type="modified residue" description="Phosphoserine" evidence="1">
    <location>
        <position position="593"/>
    </location>
</feature>
<feature type="glycosylation site" description="N-linked (GlcNAc...) asparagine" evidence="2">
    <location>
        <position position="86"/>
    </location>
</feature>
<feature type="splice variant" id="VSP_039092" description="In isoform 2." evidence="8">
    <location>
        <begin position="1"/>
        <end position="134"/>
    </location>
</feature>
<feature type="splice variant" id="VSP_002677" description="In isoform 1 and isoform 2." evidence="8">
    <original>YEAREEEDGGPRLPQDVGDLIAIPAPQQILIATFDEPRTVVSTVEF</original>
    <variation>SSSPPSTSRERS</variation>
    <location>
        <begin position="632"/>
        <end position="677"/>
    </location>
</feature>
<feature type="sequence variant" id="VAR_036575" description="In a breast cancer sample; somatic mutation; dbSNP:rs941735789." evidence="5">
    <original>S</original>
    <variation>F</variation>
    <location>
        <position position="147"/>
    </location>
</feature>
<feature type="mutagenesis site" description="Increases ATP permeation. Reduced currents. No effect on membrane location. No effect on ion selectivity." evidence="6 7">
    <original>R</original>
    <variation>A</variation>
    <variation>E</variation>
    <location>
        <position position="89"/>
    </location>
</feature>
<feature type="mutagenesis site" description="Reduced currents. No effect on membrane location. Loss of ion selectivity." evidence="7">
    <original>R</original>
    <variation>W</variation>
    <location>
        <position position="89"/>
    </location>
</feature>
<feature type="helix" evidence="14">
    <location>
        <begin position="49"/>
        <end position="75"/>
    </location>
</feature>
<feature type="helix" evidence="14">
    <location>
        <begin position="89"/>
        <end position="101"/>
    </location>
</feature>
<feature type="strand" evidence="13">
    <location>
        <begin position="108"/>
        <end position="110"/>
    </location>
</feature>
<feature type="strand" evidence="13">
    <location>
        <begin position="112"/>
        <end position="114"/>
    </location>
</feature>
<feature type="helix" evidence="14">
    <location>
        <begin position="119"/>
        <end position="182"/>
    </location>
</feature>
<feature type="helix" evidence="14">
    <location>
        <begin position="190"/>
        <end position="201"/>
    </location>
</feature>
<feature type="helix" evidence="14">
    <location>
        <begin position="205"/>
        <end position="218"/>
    </location>
</feature>
<feature type="helix" evidence="14">
    <location>
        <begin position="222"/>
        <end position="250"/>
    </location>
</feature>
<feature type="strand" evidence="14">
    <location>
        <begin position="256"/>
        <end position="260"/>
    </location>
</feature>
<feature type="strand" evidence="14">
    <location>
        <begin position="268"/>
        <end position="270"/>
    </location>
</feature>
<feature type="strand" evidence="14">
    <location>
        <begin position="276"/>
        <end position="280"/>
    </location>
</feature>
<feature type="helix" evidence="14">
    <location>
        <begin position="284"/>
        <end position="313"/>
    </location>
</feature>
<feature type="helix" evidence="14">
    <location>
        <begin position="320"/>
        <end position="328"/>
    </location>
</feature>
<feature type="helix" evidence="14">
    <location>
        <begin position="334"/>
        <end position="336"/>
    </location>
</feature>
<feature type="helix" evidence="14">
    <location>
        <begin position="343"/>
        <end position="353"/>
    </location>
</feature>
<feature type="helix" evidence="14">
    <location>
        <begin position="355"/>
        <end position="357"/>
    </location>
</feature>
<feature type="helix" evidence="14">
    <location>
        <begin position="359"/>
        <end position="366"/>
    </location>
</feature>
<feature type="helix" evidence="13">
    <location>
        <begin position="369"/>
        <end position="371"/>
    </location>
</feature>
<feature type="helix" evidence="14">
    <location>
        <begin position="373"/>
        <end position="375"/>
    </location>
</feature>
<feature type="helix" evidence="14">
    <location>
        <begin position="379"/>
        <end position="388"/>
    </location>
</feature>
<feature type="turn" evidence="14">
    <location>
        <begin position="389"/>
        <end position="391"/>
    </location>
</feature>
<comment type="function">
    <text evidence="1 6 7">Ion channel with a slight anion preference (PubMed:36973289). Also able to release ATP (PubMed:36869038). Plays a role in regulating neurogenesis and apoptosis in keratinocytes (By similarity).</text>
</comment>
<comment type="catalytic activity">
    <reaction evidence="6">
        <text>ATP(in) = ATP(out)</text>
        <dbReference type="Rhea" id="RHEA:75687"/>
        <dbReference type="ChEBI" id="CHEBI:30616"/>
    </reaction>
</comment>
<comment type="catalytic activity">
    <reaction evidence="7">
        <text>chloride(in) = chloride(out)</text>
        <dbReference type="Rhea" id="RHEA:29823"/>
        <dbReference type="ChEBI" id="CHEBI:17996"/>
    </reaction>
</comment>
<comment type="catalytic activity">
    <reaction evidence="7">
        <text>iodide(out) = iodide(in)</text>
        <dbReference type="Rhea" id="RHEA:66324"/>
        <dbReference type="ChEBI" id="CHEBI:16382"/>
    </reaction>
</comment>
<comment type="catalytic activity">
    <reaction evidence="7">
        <text>Na(+)(in) = Na(+)(out)</text>
        <dbReference type="Rhea" id="RHEA:34963"/>
        <dbReference type="ChEBI" id="CHEBI:29101"/>
    </reaction>
</comment>
<comment type="catalytic activity">
    <reaction evidence="7">
        <text>D-gluconate(in) = D-gluconate(out)</text>
        <dbReference type="Rhea" id="RHEA:76139"/>
        <dbReference type="ChEBI" id="CHEBI:18391"/>
    </reaction>
</comment>
<comment type="subunit">
    <text evidence="6">Homoheptameric.</text>
</comment>
<comment type="subcellular location">
    <subcellularLocation>
        <location evidence="9">Cell membrane</location>
        <topology evidence="3">Multi-pass membrane protein</topology>
    </subcellularLocation>
    <subcellularLocation>
        <location evidence="1">Golgi apparatus membrane</location>
        <topology evidence="3">Multi-pass membrane protein</topology>
    </subcellularLocation>
    <subcellularLocation>
        <location evidence="1">Endoplasmic reticulum membrane</location>
        <topology evidence="3">Multi-pass membrane protein</topology>
    </subcellularLocation>
    <text evidence="1">Localizes to Golgi apparatus and endoplasmic reticulum in multipotential neural stem and progenitor cells and to plasma membrane in terminally differentiated neurons.</text>
</comment>
<comment type="alternative products">
    <event type="alternative splicing"/>
    <isoform>
        <id>Q96RD6-3</id>
        <name>3</name>
        <sequence type="displayed"/>
    </isoform>
    <isoform>
        <id>Q96RD6-1</id>
        <name>1</name>
        <sequence type="described" ref="VSP_002677"/>
    </isoform>
    <isoform>
        <id>Q96RD6-2</id>
        <name>2</name>
        <sequence type="described" ref="VSP_039092 VSP_002677"/>
    </isoform>
</comment>
<comment type="PTM">
    <text evidence="1">S-palmitoylated in neural stem and progenitor cells.</text>
</comment>
<comment type="PTM">
    <text evidence="1">Cleaved by CASP3 and CASP7 during apoptosis. Cleavage has no effect on it function.</text>
</comment>
<comment type="similarity">
    <text evidence="3">Belongs to the pannexin family.</text>
</comment>
<comment type="online information" name="Wikipedia">
    <link uri="https://en.wikipedia.org/wiki/Pannexin"/>
    <text>Pannexin entry</text>
</comment>
<protein>
    <recommendedName>
        <fullName>Pannexin-2</fullName>
    </recommendedName>
</protein>
<name>PANX2_HUMAN</name>
<accession>Q96RD6</accession>
<accession>B7Z684</accession>
<accession>Q96RD5</accession>
<accession>Q9UGX8</accession>
<dbReference type="EMBL" id="AF398510">
    <property type="protein sequence ID" value="AAK91715.1"/>
    <property type="molecule type" value="mRNA"/>
</dbReference>
<dbReference type="EMBL" id="AF398511">
    <property type="protein sequence ID" value="AAK91716.1"/>
    <property type="molecule type" value="mRNA"/>
</dbReference>
<dbReference type="EMBL" id="AK299910">
    <property type="protein sequence ID" value="BAH13170.1"/>
    <property type="molecule type" value="mRNA"/>
</dbReference>
<dbReference type="EMBL" id="AL022328">
    <property type="status" value="NOT_ANNOTATED_CDS"/>
    <property type="molecule type" value="Genomic_DNA"/>
</dbReference>
<dbReference type="CCDS" id="CCDS14085.2">
    <molecule id="Q96RD6-3"/>
</dbReference>
<dbReference type="CCDS" id="CCDS54544.1">
    <molecule id="Q96RD6-1"/>
</dbReference>
<dbReference type="RefSeq" id="NP_001153772.1">
    <molecule id="Q96RD6-1"/>
    <property type="nucleotide sequence ID" value="NM_001160300.2"/>
</dbReference>
<dbReference type="RefSeq" id="NP_443071.2">
    <molecule id="Q96RD6-3"/>
    <property type="nucleotide sequence ID" value="NM_052839.4"/>
</dbReference>
<dbReference type="PDB" id="7XLB">
    <property type="method" value="EM"/>
    <property type="resolution" value="3.44 A"/>
    <property type="chains" value="A/B/C/D/E/F/G=1-410"/>
</dbReference>
<dbReference type="PDB" id="8F7C">
    <property type="method" value="EM"/>
    <property type="resolution" value="3.92 A"/>
    <property type="chains" value="A/B/C/D/E/F/G=1-372"/>
</dbReference>
<dbReference type="PDB" id="8GYQ">
    <property type="method" value="EM"/>
    <property type="resolution" value="3.40 A"/>
    <property type="chains" value="A/B/C/D/E/F/G=1-677"/>
</dbReference>
<dbReference type="PDBsum" id="7XLB"/>
<dbReference type="PDBsum" id="8F7C"/>
<dbReference type="PDBsum" id="8GYQ"/>
<dbReference type="EMDB" id="EMD-33276"/>
<dbReference type="EMDB" id="EMD-34376"/>
<dbReference type="SMR" id="Q96RD6"/>
<dbReference type="BioGRID" id="121176">
    <property type="interactions" value="8"/>
</dbReference>
<dbReference type="FunCoup" id="Q96RD6">
    <property type="interactions" value="600"/>
</dbReference>
<dbReference type="IntAct" id="Q96RD6">
    <property type="interactions" value="3"/>
</dbReference>
<dbReference type="STRING" id="9606.ENSP00000379183"/>
<dbReference type="TCDB" id="1.A.25.2.2">
    <property type="family name" value="the gap junction-forming innexin (innexin) family"/>
</dbReference>
<dbReference type="GlyCosmos" id="Q96RD6">
    <property type="glycosylation" value="1 site, No reported glycans"/>
</dbReference>
<dbReference type="GlyGen" id="Q96RD6">
    <property type="glycosylation" value="2 sites, 1 O-linked glycan (1 site)"/>
</dbReference>
<dbReference type="iPTMnet" id="Q96RD6"/>
<dbReference type="PhosphoSitePlus" id="Q96RD6"/>
<dbReference type="BioMuta" id="PANX2"/>
<dbReference type="DMDM" id="296439257"/>
<dbReference type="jPOST" id="Q96RD6"/>
<dbReference type="MassIVE" id="Q96RD6"/>
<dbReference type="PaxDb" id="9606-ENSP00000379183"/>
<dbReference type="PeptideAtlas" id="Q96RD6"/>
<dbReference type="ProteomicsDB" id="77943">
    <molecule id="Q96RD6-3"/>
</dbReference>
<dbReference type="ProteomicsDB" id="77944">
    <molecule id="Q96RD6-1"/>
</dbReference>
<dbReference type="ProteomicsDB" id="77945">
    <molecule id="Q96RD6-2"/>
</dbReference>
<dbReference type="Antibodypedia" id="14165">
    <property type="antibodies" value="184 antibodies from 28 providers"/>
</dbReference>
<dbReference type="DNASU" id="56666"/>
<dbReference type="Ensembl" id="ENST00000159647.9">
    <molecule id="Q96RD6-1"/>
    <property type="protein sequence ID" value="ENSP00000159647.5"/>
    <property type="gene ID" value="ENSG00000073150.14"/>
</dbReference>
<dbReference type="Ensembl" id="ENST00000395842.3">
    <molecule id="Q96RD6-3"/>
    <property type="protein sequence ID" value="ENSP00000379183.2"/>
    <property type="gene ID" value="ENSG00000073150.14"/>
</dbReference>
<dbReference type="GeneID" id="56666"/>
<dbReference type="KEGG" id="hsa:56666"/>
<dbReference type="MANE-Select" id="ENST00000395842.3">
    <property type="protein sequence ID" value="ENSP00000379183.2"/>
    <property type="RefSeq nucleotide sequence ID" value="NM_052839.4"/>
    <property type="RefSeq protein sequence ID" value="NP_443071.2"/>
</dbReference>
<dbReference type="UCSC" id="uc003bjn.5">
    <molecule id="Q96RD6-3"/>
    <property type="organism name" value="human"/>
</dbReference>
<dbReference type="AGR" id="HGNC:8600"/>
<dbReference type="CTD" id="56666"/>
<dbReference type="DisGeNET" id="56666"/>
<dbReference type="GeneCards" id="PANX2"/>
<dbReference type="HGNC" id="HGNC:8600">
    <property type="gene designation" value="PANX2"/>
</dbReference>
<dbReference type="HPA" id="ENSG00000073150">
    <property type="expression patterns" value="Tissue enriched (brain)"/>
</dbReference>
<dbReference type="MIM" id="608421">
    <property type="type" value="gene"/>
</dbReference>
<dbReference type="neXtProt" id="NX_Q96RD6"/>
<dbReference type="OpenTargets" id="ENSG00000073150"/>
<dbReference type="PharmGKB" id="PA32930"/>
<dbReference type="VEuPathDB" id="HostDB:ENSG00000073150"/>
<dbReference type="eggNOG" id="ENOG502QT63">
    <property type="taxonomic scope" value="Eukaryota"/>
</dbReference>
<dbReference type="GeneTree" id="ENSGT00940000153972"/>
<dbReference type="HOGENOM" id="CLU_027715_0_0_1"/>
<dbReference type="InParanoid" id="Q96RD6"/>
<dbReference type="OMA" id="CNPTHPL"/>
<dbReference type="OrthoDB" id="8620476at2759"/>
<dbReference type="PAN-GO" id="Q96RD6">
    <property type="GO annotations" value="4 GO annotations based on evolutionary models"/>
</dbReference>
<dbReference type="PhylomeDB" id="Q96RD6"/>
<dbReference type="TreeFam" id="TF333142"/>
<dbReference type="PathwayCommons" id="Q96RD6"/>
<dbReference type="Reactome" id="R-HSA-112303">
    <property type="pathway name" value="Electric Transmission Across Gap Junctions"/>
</dbReference>
<dbReference type="SignaLink" id="Q96RD6"/>
<dbReference type="SIGNOR" id="Q96RD6"/>
<dbReference type="BioGRID-ORCS" id="56666">
    <property type="hits" value="8 hits in 1151 CRISPR screens"/>
</dbReference>
<dbReference type="ChiTaRS" id="PANX2">
    <property type="organism name" value="human"/>
</dbReference>
<dbReference type="GenomeRNAi" id="56666"/>
<dbReference type="Pharos" id="Q96RD6">
    <property type="development level" value="Tbio"/>
</dbReference>
<dbReference type="PRO" id="PR:Q96RD6"/>
<dbReference type="Proteomes" id="UP000005640">
    <property type="component" value="Chromosome 22"/>
</dbReference>
<dbReference type="RNAct" id="Q96RD6">
    <property type="molecule type" value="protein"/>
</dbReference>
<dbReference type="Bgee" id="ENSG00000073150">
    <property type="expression patterns" value="Expressed in right hemisphere of cerebellum and 121 other cell types or tissues"/>
</dbReference>
<dbReference type="ExpressionAtlas" id="Q96RD6">
    <property type="expression patterns" value="baseline and differential"/>
</dbReference>
<dbReference type="GO" id="GO:0005789">
    <property type="term" value="C:endoplasmic reticulum membrane"/>
    <property type="evidence" value="ECO:0007669"/>
    <property type="project" value="UniProtKB-SubCell"/>
</dbReference>
<dbReference type="GO" id="GO:0000139">
    <property type="term" value="C:Golgi membrane"/>
    <property type="evidence" value="ECO:0007669"/>
    <property type="project" value="UniProtKB-SubCell"/>
</dbReference>
<dbReference type="GO" id="GO:0005886">
    <property type="term" value="C:plasma membrane"/>
    <property type="evidence" value="ECO:0000314"/>
    <property type="project" value="HPA"/>
</dbReference>
<dbReference type="GO" id="GO:0005243">
    <property type="term" value="F:gap junction channel activity"/>
    <property type="evidence" value="ECO:0007669"/>
    <property type="project" value="Ensembl"/>
</dbReference>
<dbReference type="GO" id="GO:0044877">
    <property type="term" value="F:protein-containing complex binding"/>
    <property type="evidence" value="ECO:0007669"/>
    <property type="project" value="Ensembl"/>
</dbReference>
<dbReference type="GO" id="GO:0005198">
    <property type="term" value="F:structural molecule activity"/>
    <property type="evidence" value="ECO:0000250"/>
    <property type="project" value="UniProtKB"/>
</dbReference>
<dbReference type="GO" id="GO:0022829">
    <property type="term" value="F:wide pore channel activity"/>
    <property type="evidence" value="ECO:0000318"/>
    <property type="project" value="GO_Central"/>
</dbReference>
<dbReference type="GO" id="GO:0007267">
    <property type="term" value="P:cell-cell signaling"/>
    <property type="evidence" value="ECO:0000318"/>
    <property type="project" value="GO_Central"/>
</dbReference>
<dbReference type="GO" id="GO:0006812">
    <property type="term" value="P:monoatomic cation transport"/>
    <property type="evidence" value="ECO:0000318"/>
    <property type="project" value="GO_Central"/>
</dbReference>
<dbReference type="GO" id="GO:0034220">
    <property type="term" value="P:monoatomic ion transmembrane transport"/>
    <property type="evidence" value="ECO:0007669"/>
    <property type="project" value="UniProtKB-KW"/>
</dbReference>
<dbReference type="GO" id="GO:0032732">
    <property type="term" value="P:positive regulation of interleukin-1 production"/>
    <property type="evidence" value="ECO:0007669"/>
    <property type="project" value="InterPro"/>
</dbReference>
<dbReference type="GO" id="GO:0002931">
    <property type="term" value="P:response to ischemia"/>
    <property type="evidence" value="ECO:0007669"/>
    <property type="project" value="Ensembl"/>
</dbReference>
<dbReference type="InterPro" id="IPR000990">
    <property type="entry name" value="Innexin"/>
</dbReference>
<dbReference type="InterPro" id="IPR039099">
    <property type="entry name" value="Pannexin"/>
</dbReference>
<dbReference type="PANTHER" id="PTHR15759">
    <property type="entry name" value="PANNEXIN"/>
    <property type="match status" value="1"/>
</dbReference>
<dbReference type="PANTHER" id="PTHR15759:SF7">
    <property type="entry name" value="PANNEXIN-2"/>
    <property type="match status" value="1"/>
</dbReference>
<dbReference type="Pfam" id="PF00876">
    <property type="entry name" value="Innexin"/>
    <property type="match status" value="1"/>
</dbReference>
<dbReference type="PROSITE" id="PS51013">
    <property type="entry name" value="PANNEXIN"/>
    <property type="match status" value="1"/>
</dbReference>
<evidence type="ECO:0000250" key="1">
    <source>
        <dbReference type="UniProtKB" id="Q6IMP4"/>
    </source>
</evidence>
<evidence type="ECO:0000255" key="2"/>
<evidence type="ECO:0000255" key="3">
    <source>
        <dbReference type="PROSITE-ProRule" id="PRU00351"/>
    </source>
</evidence>
<evidence type="ECO:0000256" key="4">
    <source>
        <dbReference type="SAM" id="MobiDB-lite"/>
    </source>
</evidence>
<evidence type="ECO:0000269" key="5">
    <source>
    </source>
</evidence>
<evidence type="ECO:0000269" key="6">
    <source>
    </source>
</evidence>
<evidence type="ECO:0000269" key="7">
    <source>
    </source>
</evidence>
<evidence type="ECO:0000303" key="8">
    <source>
    </source>
</evidence>
<evidence type="ECO:0000305" key="9">
    <source>
    </source>
</evidence>
<evidence type="ECO:0000312" key="10">
    <source>
        <dbReference type="HGNC" id="HGNC:8600"/>
    </source>
</evidence>
<evidence type="ECO:0007744" key="11">
    <source>
        <dbReference type="PDB" id="7XLB"/>
    </source>
</evidence>
<evidence type="ECO:0007744" key="12">
    <source>
        <dbReference type="PDB" id="8F7C"/>
    </source>
</evidence>
<evidence type="ECO:0007829" key="13">
    <source>
        <dbReference type="PDB" id="7XLB"/>
    </source>
</evidence>
<evidence type="ECO:0007829" key="14">
    <source>
        <dbReference type="PDB" id="8GYQ"/>
    </source>
</evidence>
<reference key="1">
    <citation type="journal article" date="2004" name="Genomics">
        <title>The mammalian pannexin family is homologous to the invertebrate innexin gap junction proteins.</title>
        <authorList>
            <person name="Baranova A."/>
            <person name="Ivanov D."/>
            <person name="Petrash N."/>
            <person name="Pestova A."/>
            <person name="Skoblov M."/>
            <person name="Kelmanson I."/>
            <person name="Shagin D."/>
            <person name="Nazarenko S."/>
            <person name="Geraymovych E."/>
            <person name="Litvin O."/>
            <person name="Tiunova A."/>
            <person name="Born T.L."/>
            <person name="Usman N."/>
            <person name="Staroverov D."/>
            <person name="Lukyanov S."/>
            <person name="Panchin Y."/>
        </authorList>
    </citation>
    <scope>NUCLEOTIDE SEQUENCE [MRNA] (ISOFORM 2)</scope>
    <scope>NUCLEOTIDE SEQUENCE [MRNA] OF 11-677 (ISOFORM 1)</scope>
</reference>
<reference key="2">
    <citation type="journal article" date="2004" name="Nat. Genet.">
        <title>Complete sequencing and characterization of 21,243 full-length human cDNAs.</title>
        <authorList>
            <person name="Ota T."/>
            <person name="Suzuki Y."/>
            <person name="Nishikawa T."/>
            <person name="Otsuki T."/>
            <person name="Sugiyama T."/>
            <person name="Irie R."/>
            <person name="Wakamatsu A."/>
            <person name="Hayashi K."/>
            <person name="Sato H."/>
            <person name="Nagai K."/>
            <person name="Kimura K."/>
            <person name="Makita H."/>
            <person name="Sekine M."/>
            <person name="Obayashi M."/>
            <person name="Nishi T."/>
            <person name="Shibahara T."/>
            <person name="Tanaka T."/>
            <person name="Ishii S."/>
            <person name="Yamamoto J."/>
            <person name="Saito K."/>
            <person name="Kawai Y."/>
            <person name="Isono Y."/>
            <person name="Nakamura Y."/>
            <person name="Nagahari K."/>
            <person name="Murakami K."/>
            <person name="Yasuda T."/>
            <person name="Iwayanagi T."/>
            <person name="Wagatsuma M."/>
            <person name="Shiratori A."/>
            <person name="Sudo H."/>
            <person name="Hosoiri T."/>
            <person name="Kaku Y."/>
            <person name="Kodaira H."/>
            <person name="Kondo H."/>
            <person name="Sugawara M."/>
            <person name="Takahashi M."/>
            <person name="Kanda K."/>
            <person name="Yokoi T."/>
            <person name="Furuya T."/>
            <person name="Kikkawa E."/>
            <person name="Omura Y."/>
            <person name="Abe K."/>
            <person name="Kamihara K."/>
            <person name="Katsuta N."/>
            <person name="Sato K."/>
            <person name="Tanikawa M."/>
            <person name="Yamazaki M."/>
            <person name="Ninomiya K."/>
            <person name="Ishibashi T."/>
            <person name="Yamashita H."/>
            <person name="Murakawa K."/>
            <person name="Fujimori K."/>
            <person name="Tanai H."/>
            <person name="Kimata M."/>
            <person name="Watanabe M."/>
            <person name="Hiraoka S."/>
            <person name="Chiba Y."/>
            <person name="Ishida S."/>
            <person name="Ono Y."/>
            <person name="Takiguchi S."/>
            <person name="Watanabe S."/>
            <person name="Yosida M."/>
            <person name="Hotuta T."/>
            <person name="Kusano J."/>
            <person name="Kanehori K."/>
            <person name="Takahashi-Fujii A."/>
            <person name="Hara H."/>
            <person name="Tanase T.-O."/>
            <person name="Nomura Y."/>
            <person name="Togiya S."/>
            <person name="Komai F."/>
            <person name="Hara R."/>
            <person name="Takeuchi K."/>
            <person name="Arita M."/>
            <person name="Imose N."/>
            <person name="Musashino K."/>
            <person name="Yuuki H."/>
            <person name="Oshima A."/>
            <person name="Sasaki N."/>
            <person name="Aotsuka S."/>
            <person name="Yoshikawa Y."/>
            <person name="Matsunawa H."/>
            <person name="Ichihara T."/>
            <person name="Shiohata N."/>
            <person name="Sano S."/>
            <person name="Moriya S."/>
            <person name="Momiyama H."/>
            <person name="Satoh N."/>
            <person name="Takami S."/>
            <person name="Terashima Y."/>
            <person name="Suzuki O."/>
            <person name="Nakagawa S."/>
            <person name="Senoh A."/>
            <person name="Mizoguchi H."/>
            <person name="Goto Y."/>
            <person name="Shimizu F."/>
            <person name="Wakebe H."/>
            <person name="Hishigaki H."/>
            <person name="Watanabe T."/>
            <person name="Sugiyama A."/>
            <person name="Takemoto M."/>
            <person name="Kawakami B."/>
            <person name="Yamazaki M."/>
            <person name="Watanabe K."/>
            <person name="Kumagai A."/>
            <person name="Itakura S."/>
            <person name="Fukuzumi Y."/>
            <person name="Fujimori Y."/>
            <person name="Komiyama M."/>
            <person name="Tashiro H."/>
            <person name="Tanigami A."/>
            <person name="Fujiwara T."/>
            <person name="Ono T."/>
            <person name="Yamada K."/>
            <person name="Fujii Y."/>
            <person name="Ozaki K."/>
            <person name="Hirao M."/>
            <person name="Ohmori Y."/>
            <person name="Kawabata A."/>
            <person name="Hikiji T."/>
            <person name="Kobatake N."/>
            <person name="Inagaki H."/>
            <person name="Ikema Y."/>
            <person name="Okamoto S."/>
            <person name="Okitani R."/>
            <person name="Kawakami T."/>
            <person name="Noguchi S."/>
            <person name="Itoh T."/>
            <person name="Shigeta K."/>
            <person name="Senba T."/>
            <person name="Matsumura K."/>
            <person name="Nakajima Y."/>
            <person name="Mizuno T."/>
            <person name="Morinaga M."/>
            <person name="Sasaki M."/>
            <person name="Togashi T."/>
            <person name="Oyama M."/>
            <person name="Hata H."/>
            <person name="Watanabe M."/>
            <person name="Komatsu T."/>
            <person name="Mizushima-Sugano J."/>
            <person name="Satoh T."/>
            <person name="Shirai Y."/>
            <person name="Takahashi Y."/>
            <person name="Nakagawa K."/>
            <person name="Okumura K."/>
            <person name="Nagase T."/>
            <person name="Nomura N."/>
            <person name="Kikuchi H."/>
            <person name="Masuho Y."/>
            <person name="Yamashita R."/>
            <person name="Nakai K."/>
            <person name="Yada T."/>
            <person name="Nakamura Y."/>
            <person name="Ohara O."/>
            <person name="Isogai T."/>
            <person name="Sugano S."/>
        </authorList>
    </citation>
    <scope>NUCLEOTIDE SEQUENCE [LARGE SCALE MRNA] (ISOFORM 3)</scope>
    <source>
        <tissue>Brain</tissue>
    </source>
</reference>
<reference key="3">
    <citation type="journal article" date="1999" name="Nature">
        <title>The DNA sequence of human chromosome 22.</title>
        <authorList>
            <person name="Dunham I."/>
            <person name="Hunt A.R."/>
            <person name="Collins J.E."/>
            <person name="Bruskiewich R."/>
            <person name="Beare D.M."/>
            <person name="Clamp M."/>
            <person name="Smink L.J."/>
            <person name="Ainscough R."/>
            <person name="Almeida J.P."/>
            <person name="Babbage A.K."/>
            <person name="Bagguley C."/>
            <person name="Bailey J."/>
            <person name="Barlow K.F."/>
            <person name="Bates K.N."/>
            <person name="Beasley O.P."/>
            <person name="Bird C.P."/>
            <person name="Blakey S.E."/>
            <person name="Bridgeman A.M."/>
            <person name="Buck D."/>
            <person name="Burgess J."/>
            <person name="Burrill W.D."/>
            <person name="Burton J."/>
            <person name="Carder C."/>
            <person name="Carter N.P."/>
            <person name="Chen Y."/>
            <person name="Clark G."/>
            <person name="Clegg S.M."/>
            <person name="Cobley V.E."/>
            <person name="Cole C.G."/>
            <person name="Collier R.E."/>
            <person name="Connor R."/>
            <person name="Conroy D."/>
            <person name="Corby N.R."/>
            <person name="Coville G.J."/>
            <person name="Cox A.V."/>
            <person name="Davis J."/>
            <person name="Dawson E."/>
            <person name="Dhami P.D."/>
            <person name="Dockree C."/>
            <person name="Dodsworth S.J."/>
            <person name="Durbin R.M."/>
            <person name="Ellington A.G."/>
            <person name="Evans K.L."/>
            <person name="Fey J.M."/>
            <person name="Fleming K."/>
            <person name="French L."/>
            <person name="Garner A.A."/>
            <person name="Gilbert J.G.R."/>
            <person name="Goward M.E."/>
            <person name="Grafham D.V."/>
            <person name="Griffiths M.N.D."/>
            <person name="Hall C."/>
            <person name="Hall R.E."/>
            <person name="Hall-Tamlyn G."/>
            <person name="Heathcott R.W."/>
            <person name="Ho S."/>
            <person name="Holmes S."/>
            <person name="Hunt S.E."/>
            <person name="Jones M.C."/>
            <person name="Kershaw J."/>
            <person name="Kimberley A.M."/>
            <person name="King A."/>
            <person name="Laird G.K."/>
            <person name="Langford C.F."/>
            <person name="Leversha M.A."/>
            <person name="Lloyd C."/>
            <person name="Lloyd D.M."/>
            <person name="Martyn I.D."/>
            <person name="Mashreghi-Mohammadi M."/>
            <person name="Matthews L.H."/>
            <person name="Mccann O.T."/>
            <person name="Mcclay J."/>
            <person name="Mclaren S."/>
            <person name="McMurray A.A."/>
            <person name="Milne S.A."/>
            <person name="Mortimore B.J."/>
            <person name="Odell C.N."/>
            <person name="Pavitt R."/>
            <person name="Pearce A.V."/>
            <person name="Pearson D."/>
            <person name="Phillimore B.J.C.T."/>
            <person name="Phillips S.H."/>
            <person name="Plumb R.W."/>
            <person name="Ramsay H."/>
            <person name="Ramsey Y."/>
            <person name="Rogers L."/>
            <person name="Ross M.T."/>
            <person name="Scott C.E."/>
            <person name="Sehra H.K."/>
            <person name="Skuce C.D."/>
            <person name="Smalley S."/>
            <person name="Smith M.L."/>
            <person name="Soderlund C."/>
            <person name="Spragon L."/>
            <person name="Steward C.A."/>
            <person name="Sulston J.E."/>
            <person name="Swann R.M."/>
            <person name="Vaudin M."/>
            <person name="Wall M."/>
            <person name="Wallis J.M."/>
            <person name="Whiteley M.N."/>
            <person name="Willey D.L."/>
            <person name="Williams L."/>
            <person name="Williams S.A."/>
            <person name="Williamson H."/>
            <person name="Wilmer T.E."/>
            <person name="Wilming L."/>
            <person name="Wright C.L."/>
            <person name="Hubbard T."/>
            <person name="Bentley D.R."/>
            <person name="Beck S."/>
            <person name="Rogers J."/>
            <person name="Shimizu N."/>
            <person name="Minoshima S."/>
            <person name="Kawasaki K."/>
            <person name="Sasaki T."/>
            <person name="Asakawa S."/>
            <person name="Kudoh J."/>
            <person name="Shintani A."/>
            <person name="Shibuya K."/>
            <person name="Yoshizaki Y."/>
            <person name="Aoki N."/>
            <person name="Mitsuyama S."/>
            <person name="Roe B.A."/>
            <person name="Chen F."/>
            <person name="Chu L."/>
            <person name="Crabtree J."/>
            <person name="Deschamps S."/>
            <person name="Do A."/>
            <person name="Do T."/>
            <person name="Dorman A."/>
            <person name="Fang F."/>
            <person name="Fu Y."/>
            <person name="Hu P."/>
            <person name="Hua A."/>
            <person name="Kenton S."/>
            <person name="Lai H."/>
            <person name="Lao H.I."/>
            <person name="Lewis J."/>
            <person name="Lewis S."/>
            <person name="Lin S.-P."/>
            <person name="Loh P."/>
            <person name="Malaj E."/>
            <person name="Nguyen T."/>
            <person name="Pan H."/>
            <person name="Phan S."/>
            <person name="Qi S."/>
            <person name="Qian Y."/>
            <person name="Ray L."/>
            <person name="Ren Q."/>
            <person name="Shaull S."/>
            <person name="Sloan D."/>
            <person name="Song L."/>
            <person name="Wang Q."/>
            <person name="Wang Y."/>
            <person name="Wang Z."/>
            <person name="White J."/>
            <person name="Willingham D."/>
            <person name="Wu H."/>
            <person name="Yao Z."/>
            <person name="Zhan M."/>
            <person name="Zhang G."/>
            <person name="Chissoe S."/>
            <person name="Murray J."/>
            <person name="Miller N."/>
            <person name="Minx P."/>
            <person name="Fulton R."/>
            <person name="Johnson D."/>
            <person name="Bemis G."/>
            <person name="Bentley D."/>
            <person name="Bradshaw H."/>
            <person name="Bourne S."/>
            <person name="Cordes M."/>
            <person name="Du Z."/>
            <person name="Fulton L."/>
            <person name="Goela D."/>
            <person name="Graves T."/>
            <person name="Hawkins J."/>
            <person name="Hinds K."/>
            <person name="Kemp K."/>
            <person name="Latreille P."/>
            <person name="Layman D."/>
            <person name="Ozersky P."/>
            <person name="Rohlfing T."/>
            <person name="Scheet P."/>
            <person name="Walker C."/>
            <person name="Wamsley A."/>
            <person name="Wohldmann P."/>
            <person name="Pepin K."/>
            <person name="Nelson J."/>
            <person name="Korf I."/>
            <person name="Bedell J.A."/>
            <person name="Hillier L.W."/>
            <person name="Mardis E."/>
            <person name="Waterston R."/>
            <person name="Wilson R."/>
            <person name="Emanuel B.S."/>
            <person name="Shaikh T."/>
            <person name="Kurahashi H."/>
            <person name="Saitta S."/>
            <person name="Budarf M.L."/>
            <person name="McDermid H.E."/>
            <person name="Johnson A."/>
            <person name="Wong A.C.C."/>
            <person name="Morrow B.E."/>
            <person name="Edelmann L."/>
            <person name="Kim U.J."/>
            <person name="Shizuya H."/>
            <person name="Simon M.I."/>
            <person name="Dumanski J.P."/>
            <person name="Peyrard M."/>
            <person name="Kedra D."/>
            <person name="Seroussi E."/>
            <person name="Fransson I."/>
            <person name="Tapia I."/>
            <person name="Bruder C.E."/>
            <person name="O'Brien K.P."/>
            <person name="Wilkinson P."/>
            <person name="Bodenteich A."/>
            <person name="Hartman K."/>
            <person name="Hu X."/>
            <person name="Khan A.S."/>
            <person name="Lane L."/>
            <person name="Tilahun Y."/>
            <person name="Wright H."/>
        </authorList>
    </citation>
    <scope>NUCLEOTIDE SEQUENCE [LARGE SCALE GENOMIC DNA]</scope>
</reference>
<reference evidence="11" key="4">
    <citation type="journal article" date="2023" name="Nat. Commun.">
        <title>Cryo-EM structure of human heptameric pannexin 2 channel.</title>
        <authorList>
            <person name="Zhang H."/>
            <person name="Wang S."/>
            <person name="Zhang Z."/>
            <person name="Hou M."/>
            <person name="Du C."/>
            <person name="Zhao Z."/>
            <person name="Vogel H."/>
            <person name="Li Z."/>
            <person name="Yan K."/>
            <person name="Zhang X."/>
            <person name="Lu J."/>
            <person name="Liang Y."/>
            <person name="Yuan S."/>
            <person name="Wang D."/>
            <person name="Zhang H."/>
        </authorList>
    </citation>
    <scope>STRUCTURE BY ELECTRON MICROSCOPY (3.44 ANGSTROMS) OF 1-410</scope>
    <scope>SUBUNIT</scope>
    <scope>MUTAGENESIS OF ARG-89</scope>
    <scope>TRANSPORTER ACTIVITY</scope>
</reference>
<reference evidence="12" key="5">
    <citation type="journal article" date="2023" name="Nat. Commun.">
        <title>Structural and functional analysis of human pannexin 2 channel.</title>
        <authorList>
            <person name="He Z."/>
            <person name="Zhao Y."/>
            <person name="Rau M.J."/>
            <person name="Fitzpatrick J.A.J."/>
            <person name="Sah R."/>
            <person name="Hu H."/>
            <person name="Yuan P."/>
        </authorList>
    </citation>
    <scope>STRUCTURE BY ELECTRON MICROSCOPY (3.92 ANGSTROMS) OF 1-372</scope>
    <scope>SUBUNIT</scope>
    <scope>TRANSPORTER ACTIVITY</scope>
    <scope>SUBCELLULAR LOCATION</scope>
    <scope>MUTAGENESIS OF ARG-89</scope>
</reference>
<reference key="6">
    <citation type="journal article" date="2006" name="Science">
        <title>The consensus coding sequences of human breast and colorectal cancers.</title>
        <authorList>
            <person name="Sjoeblom T."/>
            <person name="Jones S."/>
            <person name="Wood L.D."/>
            <person name="Parsons D.W."/>
            <person name="Lin J."/>
            <person name="Barber T.D."/>
            <person name="Mandelker D."/>
            <person name="Leary R.J."/>
            <person name="Ptak J."/>
            <person name="Silliman N."/>
            <person name="Szabo S."/>
            <person name="Buckhaults P."/>
            <person name="Farrell C."/>
            <person name="Meeh P."/>
            <person name="Markowitz S.D."/>
            <person name="Willis J."/>
            <person name="Dawson D."/>
            <person name="Willson J.K.V."/>
            <person name="Gazdar A.F."/>
            <person name="Hartigan J."/>
            <person name="Wu L."/>
            <person name="Liu C."/>
            <person name="Parmigiani G."/>
            <person name="Park B.H."/>
            <person name="Bachman K.E."/>
            <person name="Papadopoulos N."/>
            <person name="Vogelstein B."/>
            <person name="Kinzler K.W."/>
            <person name="Velculescu V.E."/>
        </authorList>
    </citation>
    <scope>VARIANT [LARGE SCALE ANALYSIS] PHE-147</scope>
</reference>
<keyword id="KW-0002">3D-structure</keyword>
<keyword id="KW-0025">Alternative splicing</keyword>
<keyword id="KW-1003">Cell membrane</keyword>
<keyword id="KW-0256">Endoplasmic reticulum</keyword>
<keyword id="KW-0325">Glycoprotein</keyword>
<keyword id="KW-0333">Golgi apparatus</keyword>
<keyword id="KW-0407">Ion channel</keyword>
<keyword id="KW-0406">Ion transport</keyword>
<keyword id="KW-0472">Membrane</keyword>
<keyword id="KW-0597">Phosphoprotein</keyword>
<keyword id="KW-1267">Proteomics identification</keyword>
<keyword id="KW-1185">Reference proteome</keyword>
<keyword id="KW-0812">Transmembrane</keyword>
<keyword id="KW-1133">Transmembrane helix</keyword>
<keyword id="KW-0813">Transport</keyword>
<organism>
    <name type="scientific">Homo sapiens</name>
    <name type="common">Human</name>
    <dbReference type="NCBI Taxonomy" id="9606"/>
    <lineage>
        <taxon>Eukaryota</taxon>
        <taxon>Metazoa</taxon>
        <taxon>Chordata</taxon>
        <taxon>Craniata</taxon>
        <taxon>Vertebrata</taxon>
        <taxon>Euteleostomi</taxon>
        <taxon>Mammalia</taxon>
        <taxon>Eutheria</taxon>
        <taxon>Euarchontoglires</taxon>
        <taxon>Primates</taxon>
        <taxon>Haplorrhini</taxon>
        <taxon>Catarrhini</taxon>
        <taxon>Hominidae</taxon>
        <taxon>Homo</taxon>
    </lineage>
</organism>